<feature type="chain" id="PRO_0000265660" description="Elongation factor 4">
    <location>
        <begin position="1"/>
        <end position="639"/>
    </location>
</feature>
<feature type="domain" description="tr-type G">
    <location>
        <begin position="39"/>
        <end position="221"/>
    </location>
</feature>
<feature type="binding site" evidence="1">
    <location>
        <begin position="51"/>
        <end position="56"/>
    </location>
    <ligand>
        <name>GTP</name>
        <dbReference type="ChEBI" id="CHEBI:37565"/>
    </ligand>
</feature>
<feature type="binding site" evidence="1">
    <location>
        <begin position="168"/>
        <end position="171"/>
    </location>
    <ligand>
        <name>GTP</name>
        <dbReference type="ChEBI" id="CHEBI:37565"/>
    </ligand>
</feature>
<keyword id="KW-1003">Cell membrane</keyword>
<keyword id="KW-0342">GTP-binding</keyword>
<keyword id="KW-0378">Hydrolase</keyword>
<keyword id="KW-0472">Membrane</keyword>
<keyword id="KW-0547">Nucleotide-binding</keyword>
<keyword id="KW-0648">Protein biosynthesis</keyword>
<keyword id="KW-1185">Reference proteome</keyword>
<evidence type="ECO:0000255" key="1">
    <source>
        <dbReference type="HAMAP-Rule" id="MF_00071"/>
    </source>
</evidence>
<evidence type="ECO:0000305" key="2"/>
<protein>
    <recommendedName>
        <fullName evidence="1">Elongation factor 4</fullName>
        <shortName evidence="1">EF-4</shortName>
        <ecNumber evidence="1">3.6.5.n1</ecNumber>
    </recommendedName>
    <alternativeName>
        <fullName evidence="1">Ribosomal back-translocase LepA</fullName>
    </alternativeName>
</protein>
<name>LEPA_FRACC</name>
<proteinExistence type="inferred from homology"/>
<comment type="function">
    <text evidence="1">Required for accurate and efficient protein synthesis under certain stress conditions. May act as a fidelity factor of the translation reaction, by catalyzing a one-codon backward translocation of tRNAs on improperly translocated ribosomes. Back-translocation proceeds from a post-translocation (POST) complex to a pre-translocation (PRE) complex, thus giving elongation factor G a second chance to translocate the tRNAs correctly. Binds to ribosomes in a GTP-dependent manner.</text>
</comment>
<comment type="catalytic activity">
    <reaction evidence="1">
        <text>GTP + H2O = GDP + phosphate + H(+)</text>
        <dbReference type="Rhea" id="RHEA:19669"/>
        <dbReference type="ChEBI" id="CHEBI:15377"/>
        <dbReference type="ChEBI" id="CHEBI:15378"/>
        <dbReference type="ChEBI" id="CHEBI:37565"/>
        <dbReference type="ChEBI" id="CHEBI:43474"/>
        <dbReference type="ChEBI" id="CHEBI:58189"/>
        <dbReference type="EC" id="3.6.5.n1"/>
    </reaction>
</comment>
<comment type="subcellular location">
    <subcellularLocation>
        <location evidence="1">Cell membrane</location>
        <topology evidence="1">Peripheral membrane protein</topology>
        <orientation evidence="1">Cytoplasmic side</orientation>
    </subcellularLocation>
</comment>
<comment type="similarity">
    <text evidence="1">Belongs to the TRAFAC class translation factor GTPase superfamily. Classic translation factor GTPase family. LepA subfamily.</text>
</comment>
<comment type="sequence caution" evidence="2">
    <conflict type="erroneous initiation">
        <sequence resource="EMBL-CDS" id="ABD10640"/>
    </conflict>
</comment>
<dbReference type="EC" id="3.6.5.n1" evidence="1"/>
<dbReference type="EMBL" id="CP000249">
    <property type="protein sequence ID" value="ABD10640.1"/>
    <property type="status" value="ALT_INIT"/>
    <property type="molecule type" value="Genomic_DNA"/>
</dbReference>
<dbReference type="SMR" id="Q2JDK2"/>
<dbReference type="STRING" id="106370.Francci3_1262"/>
<dbReference type="KEGG" id="fra:Francci3_1262"/>
<dbReference type="eggNOG" id="COG0481">
    <property type="taxonomic scope" value="Bacteria"/>
</dbReference>
<dbReference type="HOGENOM" id="CLU_009995_3_3_11"/>
<dbReference type="PhylomeDB" id="Q2JDK2"/>
<dbReference type="Proteomes" id="UP000001937">
    <property type="component" value="Chromosome"/>
</dbReference>
<dbReference type="GO" id="GO:0005886">
    <property type="term" value="C:plasma membrane"/>
    <property type="evidence" value="ECO:0007669"/>
    <property type="project" value="UniProtKB-SubCell"/>
</dbReference>
<dbReference type="GO" id="GO:0005525">
    <property type="term" value="F:GTP binding"/>
    <property type="evidence" value="ECO:0007669"/>
    <property type="project" value="UniProtKB-UniRule"/>
</dbReference>
<dbReference type="GO" id="GO:0003924">
    <property type="term" value="F:GTPase activity"/>
    <property type="evidence" value="ECO:0007669"/>
    <property type="project" value="UniProtKB-UniRule"/>
</dbReference>
<dbReference type="GO" id="GO:0043022">
    <property type="term" value="F:ribosome binding"/>
    <property type="evidence" value="ECO:0007669"/>
    <property type="project" value="UniProtKB-UniRule"/>
</dbReference>
<dbReference type="GO" id="GO:0003746">
    <property type="term" value="F:translation elongation factor activity"/>
    <property type="evidence" value="ECO:0007669"/>
    <property type="project" value="UniProtKB-UniRule"/>
</dbReference>
<dbReference type="GO" id="GO:0045727">
    <property type="term" value="P:positive regulation of translation"/>
    <property type="evidence" value="ECO:0007669"/>
    <property type="project" value="UniProtKB-UniRule"/>
</dbReference>
<dbReference type="CDD" id="cd03699">
    <property type="entry name" value="EF4_II"/>
    <property type="match status" value="1"/>
</dbReference>
<dbReference type="CDD" id="cd16260">
    <property type="entry name" value="EF4_III"/>
    <property type="match status" value="1"/>
</dbReference>
<dbReference type="CDD" id="cd01890">
    <property type="entry name" value="LepA"/>
    <property type="match status" value="1"/>
</dbReference>
<dbReference type="CDD" id="cd03709">
    <property type="entry name" value="lepA_C"/>
    <property type="match status" value="1"/>
</dbReference>
<dbReference type="FunFam" id="3.40.50.300:FF:000078">
    <property type="entry name" value="Elongation factor 4"/>
    <property type="match status" value="1"/>
</dbReference>
<dbReference type="FunFam" id="2.40.30.10:FF:000015">
    <property type="entry name" value="Translation factor GUF1, mitochondrial"/>
    <property type="match status" value="1"/>
</dbReference>
<dbReference type="FunFam" id="3.30.70.240:FF:000007">
    <property type="entry name" value="Translation factor GUF1, mitochondrial"/>
    <property type="match status" value="1"/>
</dbReference>
<dbReference type="FunFam" id="3.30.70.2570:FF:000001">
    <property type="entry name" value="Translation factor GUF1, mitochondrial"/>
    <property type="match status" value="1"/>
</dbReference>
<dbReference type="FunFam" id="3.30.70.870:FF:000004">
    <property type="entry name" value="Translation factor GUF1, mitochondrial"/>
    <property type="match status" value="1"/>
</dbReference>
<dbReference type="Gene3D" id="3.30.70.240">
    <property type="match status" value="1"/>
</dbReference>
<dbReference type="Gene3D" id="3.30.70.2570">
    <property type="entry name" value="Elongation factor 4, C-terminal domain"/>
    <property type="match status" value="1"/>
</dbReference>
<dbReference type="Gene3D" id="3.30.70.870">
    <property type="entry name" value="Elongation Factor G (Translational Gtpase), domain 3"/>
    <property type="match status" value="1"/>
</dbReference>
<dbReference type="Gene3D" id="3.40.50.300">
    <property type="entry name" value="P-loop containing nucleotide triphosphate hydrolases"/>
    <property type="match status" value="1"/>
</dbReference>
<dbReference type="Gene3D" id="2.40.30.10">
    <property type="entry name" value="Translation factors"/>
    <property type="match status" value="1"/>
</dbReference>
<dbReference type="HAMAP" id="MF_00071">
    <property type="entry name" value="LepA"/>
    <property type="match status" value="1"/>
</dbReference>
<dbReference type="InterPro" id="IPR006297">
    <property type="entry name" value="EF-4"/>
</dbReference>
<dbReference type="InterPro" id="IPR035647">
    <property type="entry name" value="EFG_III/V"/>
</dbReference>
<dbReference type="InterPro" id="IPR000640">
    <property type="entry name" value="EFG_V-like"/>
</dbReference>
<dbReference type="InterPro" id="IPR004161">
    <property type="entry name" value="EFTu-like_2"/>
</dbReference>
<dbReference type="InterPro" id="IPR031157">
    <property type="entry name" value="G_TR_CS"/>
</dbReference>
<dbReference type="InterPro" id="IPR038363">
    <property type="entry name" value="LepA_C_sf"/>
</dbReference>
<dbReference type="InterPro" id="IPR013842">
    <property type="entry name" value="LepA_CTD"/>
</dbReference>
<dbReference type="InterPro" id="IPR035654">
    <property type="entry name" value="LepA_IV"/>
</dbReference>
<dbReference type="InterPro" id="IPR027417">
    <property type="entry name" value="P-loop_NTPase"/>
</dbReference>
<dbReference type="InterPro" id="IPR005225">
    <property type="entry name" value="Small_GTP-bd"/>
</dbReference>
<dbReference type="InterPro" id="IPR000795">
    <property type="entry name" value="T_Tr_GTP-bd_dom"/>
</dbReference>
<dbReference type="NCBIfam" id="TIGR01393">
    <property type="entry name" value="lepA"/>
    <property type="match status" value="1"/>
</dbReference>
<dbReference type="NCBIfam" id="TIGR00231">
    <property type="entry name" value="small_GTP"/>
    <property type="match status" value="1"/>
</dbReference>
<dbReference type="PANTHER" id="PTHR43512:SF4">
    <property type="entry name" value="TRANSLATION FACTOR GUF1 HOMOLOG, CHLOROPLASTIC"/>
    <property type="match status" value="1"/>
</dbReference>
<dbReference type="PANTHER" id="PTHR43512">
    <property type="entry name" value="TRANSLATION FACTOR GUF1-RELATED"/>
    <property type="match status" value="1"/>
</dbReference>
<dbReference type="Pfam" id="PF00679">
    <property type="entry name" value="EFG_C"/>
    <property type="match status" value="1"/>
</dbReference>
<dbReference type="Pfam" id="PF00009">
    <property type="entry name" value="GTP_EFTU"/>
    <property type="match status" value="1"/>
</dbReference>
<dbReference type="Pfam" id="PF03144">
    <property type="entry name" value="GTP_EFTU_D2"/>
    <property type="match status" value="1"/>
</dbReference>
<dbReference type="Pfam" id="PF06421">
    <property type="entry name" value="LepA_C"/>
    <property type="match status" value="1"/>
</dbReference>
<dbReference type="PRINTS" id="PR00315">
    <property type="entry name" value="ELONGATNFCT"/>
</dbReference>
<dbReference type="SMART" id="SM00838">
    <property type="entry name" value="EFG_C"/>
    <property type="match status" value="1"/>
</dbReference>
<dbReference type="SUPFAM" id="SSF54980">
    <property type="entry name" value="EF-G C-terminal domain-like"/>
    <property type="match status" value="2"/>
</dbReference>
<dbReference type="SUPFAM" id="SSF52540">
    <property type="entry name" value="P-loop containing nucleoside triphosphate hydrolases"/>
    <property type="match status" value="1"/>
</dbReference>
<dbReference type="PROSITE" id="PS00301">
    <property type="entry name" value="G_TR_1"/>
    <property type="match status" value="1"/>
</dbReference>
<dbReference type="PROSITE" id="PS51722">
    <property type="entry name" value="G_TR_2"/>
    <property type="match status" value="1"/>
</dbReference>
<sequence>MKVVDPDIGTGGSTVITASETRTLRVSTAPHLAPGADPTMIRNFCIIAHIDHGKSTLADRMLGVTGVVEARNMRAQYLDRMDIERERGITIKAQNVRLPWRADDGRDYILHLIDTPGHVDFSYEVSRSLAACEGAVLLVDAAQGIEAQTLANLYLAIENDLTIVPVLNKIDLPAAQPEKYAEEIAAIIGCEPGEVLRVSGKTGQGVPELLNEIVRRVPAPVGDPDGPARAMIFDSVYDIYRGVITYVRVVDGTLTTRDRCLMMSTSASHETLEVGVISPDPHPTGSLSVGEVGYVIPGVKDVRQARVGDTITTTRRPATEMLGGYRDPLPMVYSGLYPIDGSEYPALREALDKLQLNDAALTYEPETSAALGFGFRCGFLGLLHLEIVRERLEREFNLTLISTAPNVVYRVVMEDHSEIIVTNPSDWPGGKIAEVYEPVVEAMLLLPTDFVGAVMELCQGRRGVLKGMDYLSTDRVELKYTLPLGEIIFDFFDALKSRTRGYASLDYEPAGEQLADLVKVDILLQGETVDAFSAIVHREKAYAYGVSMTTKLRELIPRQQFEVPIQAAIGSRIIARENIRAIRKDVLAKCYGGDITRKRKLLEKQKEGKKRMKTIGRVEVPQEAFIAALSTDTGKPAVK</sequence>
<gene>
    <name evidence="1" type="primary">lepA</name>
    <name type="ordered locus">Francci3_1262</name>
</gene>
<organism>
    <name type="scientific">Frankia casuarinae (strain DSM 45818 / CECT 9043 / HFP020203 / CcI3)</name>
    <dbReference type="NCBI Taxonomy" id="106370"/>
    <lineage>
        <taxon>Bacteria</taxon>
        <taxon>Bacillati</taxon>
        <taxon>Actinomycetota</taxon>
        <taxon>Actinomycetes</taxon>
        <taxon>Frankiales</taxon>
        <taxon>Frankiaceae</taxon>
        <taxon>Frankia</taxon>
    </lineage>
</organism>
<accession>Q2JDK2</accession>
<reference key="1">
    <citation type="journal article" date="2007" name="Genome Res.">
        <title>Genome characteristics of facultatively symbiotic Frankia sp. strains reflect host range and host plant biogeography.</title>
        <authorList>
            <person name="Normand P."/>
            <person name="Lapierre P."/>
            <person name="Tisa L.S."/>
            <person name="Gogarten J.P."/>
            <person name="Alloisio N."/>
            <person name="Bagnarol E."/>
            <person name="Bassi C.A."/>
            <person name="Berry A.M."/>
            <person name="Bickhart D.M."/>
            <person name="Choisne N."/>
            <person name="Couloux A."/>
            <person name="Cournoyer B."/>
            <person name="Cruveiller S."/>
            <person name="Daubin V."/>
            <person name="Demange N."/>
            <person name="Francino M.P."/>
            <person name="Goltsman E."/>
            <person name="Huang Y."/>
            <person name="Kopp O.R."/>
            <person name="Labarre L."/>
            <person name="Lapidus A."/>
            <person name="Lavire C."/>
            <person name="Marechal J."/>
            <person name="Martinez M."/>
            <person name="Mastronunzio J.E."/>
            <person name="Mullin B.C."/>
            <person name="Niemann J."/>
            <person name="Pujic P."/>
            <person name="Rawnsley T."/>
            <person name="Rouy Z."/>
            <person name="Schenowitz C."/>
            <person name="Sellstedt A."/>
            <person name="Tavares F."/>
            <person name="Tomkins J.P."/>
            <person name="Vallenet D."/>
            <person name="Valverde C."/>
            <person name="Wall L.G."/>
            <person name="Wang Y."/>
            <person name="Medigue C."/>
            <person name="Benson D.R."/>
        </authorList>
    </citation>
    <scope>NUCLEOTIDE SEQUENCE [LARGE SCALE GENOMIC DNA]</scope>
    <source>
        <strain>DSM 45818 / CECT 9043 / HFP020203 / CcI3</strain>
    </source>
</reference>